<keyword id="KW-0963">Cytoplasm</keyword>
<keyword id="KW-1185">Reference proteome</keyword>
<keyword id="KW-0694">RNA-binding</keyword>
<protein>
    <recommendedName>
        <fullName evidence="1">SsrA-binding protein</fullName>
    </recommendedName>
    <alternativeName>
        <fullName evidence="1">Small protein B</fullName>
    </alternativeName>
</protein>
<name>SSRP_ROSDO</name>
<accession>Q16BP2</accession>
<feature type="chain" id="PRO_0000331090" description="SsrA-binding protein">
    <location>
        <begin position="1"/>
        <end position="162"/>
    </location>
</feature>
<feature type="region of interest" description="Disordered" evidence="2">
    <location>
        <begin position="140"/>
        <end position="162"/>
    </location>
</feature>
<sequence>MAQVKSSSKSDPNYKVVAENRRARFDYAIESDVECGIILEGSEVKSLREGGANIAESYAAVEDGELWLVNSYIAPYKQAKTFQHEERRRRKLLISRKQLSDFWNATQRKGMTLVPLVLYFNHRGMAKIKIGVAKGKKLHDKRETAAKRDWSRQKSRLMKDHG</sequence>
<organism>
    <name type="scientific">Roseobacter denitrificans (strain ATCC 33942 / OCh 114)</name>
    <name type="common">Erythrobacter sp. (strain OCh 114)</name>
    <name type="synonym">Roseobacter denitrificans</name>
    <dbReference type="NCBI Taxonomy" id="375451"/>
    <lineage>
        <taxon>Bacteria</taxon>
        <taxon>Pseudomonadati</taxon>
        <taxon>Pseudomonadota</taxon>
        <taxon>Alphaproteobacteria</taxon>
        <taxon>Rhodobacterales</taxon>
        <taxon>Roseobacteraceae</taxon>
        <taxon>Roseobacter</taxon>
    </lineage>
</organism>
<gene>
    <name evidence="1" type="primary">smpB</name>
    <name type="ordered locus">RD1_0933</name>
</gene>
<reference key="1">
    <citation type="journal article" date="2007" name="J. Bacteriol.">
        <title>The complete genome sequence of Roseobacter denitrificans reveals a mixotrophic rather than photosynthetic metabolism.</title>
        <authorList>
            <person name="Swingley W.D."/>
            <person name="Sadekar S."/>
            <person name="Mastrian S.D."/>
            <person name="Matthies H.J."/>
            <person name="Hao J."/>
            <person name="Ramos H."/>
            <person name="Acharya C.R."/>
            <person name="Conrad A.L."/>
            <person name="Taylor H.L."/>
            <person name="Dejesa L.C."/>
            <person name="Shah M.K."/>
            <person name="O'Huallachain M.E."/>
            <person name="Lince M.T."/>
            <person name="Blankenship R.E."/>
            <person name="Beatty J.T."/>
            <person name="Touchman J.W."/>
        </authorList>
    </citation>
    <scope>NUCLEOTIDE SEQUENCE [LARGE SCALE GENOMIC DNA]</scope>
    <source>
        <strain>ATCC 33942 / OCh 114</strain>
    </source>
</reference>
<evidence type="ECO:0000255" key="1">
    <source>
        <dbReference type="HAMAP-Rule" id="MF_00023"/>
    </source>
</evidence>
<evidence type="ECO:0000256" key="2">
    <source>
        <dbReference type="SAM" id="MobiDB-lite"/>
    </source>
</evidence>
<evidence type="ECO:0000305" key="3"/>
<dbReference type="EMBL" id="CP000362">
    <property type="protein sequence ID" value="ABG30601.1"/>
    <property type="status" value="ALT_INIT"/>
    <property type="molecule type" value="Genomic_DNA"/>
</dbReference>
<dbReference type="RefSeq" id="WP_044033346.1">
    <property type="nucleotide sequence ID" value="NC_008209.1"/>
</dbReference>
<dbReference type="SMR" id="Q16BP2"/>
<dbReference type="STRING" id="375451.RD1_0933"/>
<dbReference type="KEGG" id="rde:RD1_0933"/>
<dbReference type="eggNOG" id="COG0691">
    <property type="taxonomic scope" value="Bacteria"/>
</dbReference>
<dbReference type="HOGENOM" id="CLU_108953_0_1_5"/>
<dbReference type="OrthoDB" id="9805462at2"/>
<dbReference type="Proteomes" id="UP000007029">
    <property type="component" value="Chromosome"/>
</dbReference>
<dbReference type="GO" id="GO:0005829">
    <property type="term" value="C:cytosol"/>
    <property type="evidence" value="ECO:0007669"/>
    <property type="project" value="TreeGrafter"/>
</dbReference>
<dbReference type="GO" id="GO:0003723">
    <property type="term" value="F:RNA binding"/>
    <property type="evidence" value="ECO:0007669"/>
    <property type="project" value="UniProtKB-UniRule"/>
</dbReference>
<dbReference type="GO" id="GO:0070929">
    <property type="term" value="P:trans-translation"/>
    <property type="evidence" value="ECO:0007669"/>
    <property type="project" value="UniProtKB-UniRule"/>
</dbReference>
<dbReference type="CDD" id="cd09294">
    <property type="entry name" value="SmpB"/>
    <property type="match status" value="1"/>
</dbReference>
<dbReference type="Gene3D" id="2.40.280.10">
    <property type="match status" value="1"/>
</dbReference>
<dbReference type="HAMAP" id="MF_00023">
    <property type="entry name" value="SmpB"/>
    <property type="match status" value="1"/>
</dbReference>
<dbReference type="InterPro" id="IPR023620">
    <property type="entry name" value="SmpB"/>
</dbReference>
<dbReference type="InterPro" id="IPR000037">
    <property type="entry name" value="SsrA-bd_prot"/>
</dbReference>
<dbReference type="InterPro" id="IPR020081">
    <property type="entry name" value="SsrA-bd_prot_CS"/>
</dbReference>
<dbReference type="NCBIfam" id="NF003843">
    <property type="entry name" value="PRK05422.1"/>
    <property type="match status" value="1"/>
</dbReference>
<dbReference type="NCBIfam" id="TIGR00086">
    <property type="entry name" value="smpB"/>
    <property type="match status" value="1"/>
</dbReference>
<dbReference type="PANTHER" id="PTHR30308:SF2">
    <property type="entry name" value="SSRA-BINDING PROTEIN"/>
    <property type="match status" value="1"/>
</dbReference>
<dbReference type="PANTHER" id="PTHR30308">
    <property type="entry name" value="TMRNA-BINDING COMPONENT OF TRANS-TRANSLATION TAGGING COMPLEX"/>
    <property type="match status" value="1"/>
</dbReference>
<dbReference type="Pfam" id="PF01668">
    <property type="entry name" value="SmpB"/>
    <property type="match status" value="1"/>
</dbReference>
<dbReference type="SUPFAM" id="SSF74982">
    <property type="entry name" value="Small protein B (SmpB)"/>
    <property type="match status" value="1"/>
</dbReference>
<dbReference type="PROSITE" id="PS01317">
    <property type="entry name" value="SSRP"/>
    <property type="match status" value="1"/>
</dbReference>
<proteinExistence type="inferred from homology"/>
<comment type="function">
    <text evidence="1">Required for rescue of stalled ribosomes mediated by trans-translation. Binds to transfer-messenger RNA (tmRNA), required for stable association of tmRNA with ribosomes. tmRNA and SmpB together mimic tRNA shape, replacing the anticodon stem-loop with SmpB. tmRNA is encoded by the ssrA gene; the 2 termini fold to resemble tRNA(Ala) and it encodes a 'tag peptide', a short internal open reading frame. During trans-translation Ala-aminoacylated tmRNA acts like a tRNA, entering the A-site of stalled ribosomes, displacing the stalled mRNA. The ribosome then switches to translate the ORF on the tmRNA; the nascent peptide is terminated with the 'tag peptide' encoded by the tmRNA and targeted for degradation. The ribosome is freed to recommence translation, which seems to be the essential function of trans-translation.</text>
</comment>
<comment type="subcellular location">
    <subcellularLocation>
        <location evidence="1">Cytoplasm</location>
    </subcellularLocation>
    <text evidence="1">The tmRNA-SmpB complex associates with stalled 70S ribosomes.</text>
</comment>
<comment type="similarity">
    <text evidence="1">Belongs to the SmpB family.</text>
</comment>
<comment type="sequence caution" evidence="3">
    <conflict type="erroneous initiation">
        <sequence resource="EMBL-CDS" id="ABG30601"/>
    </conflict>
    <text>Extended N-terminus.</text>
</comment>